<dbReference type="EC" id="1.15.1.1"/>
<dbReference type="EMBL" id="AF061518">
    <property type="protein sequence ID" value="AAC24832.1"/>
    <property type="molecule type" value="mRNA"/>
</dbReference>
<dbReference type="EMBL" id="AC009991">
    <property type="protein sequence ID" value="AAF01529.1"/>
    <property type="molecule type" value="Genomic_DNA"/>
</dbReference>
<dbReference type="EMBL" id="CP002686">
    <property type="protein sequence ID" value="AEE74977.1"/>
    <property type="molecule type" value="Genomic_DNA"/>
</dbReference>
<dbReference type="EMBL" id="AY072495">
    <property type="protein sequence ID" value="AAL66910.1"/>
    <property type="molecule type" value="mRNA"/>
</dbReference>
<dbReference type="EMBL" id="AY059807">
    <property type="protein sequence ID" value="AAL24289.1"/>
    <property type="molecule type" value="mRNA"/>
</dbReference>
<dbReference type="EMBL" id="AY085319">
    <property type="protein sequence ID" value="AAM62550.1"/>
    <property type="molecule type" value="mRNA"/>
</dbReference>
<dbReference type="PIR" id="PA0012">
    <property type="entry name" value="PA0012"/>
</dbReference>
<dbReference type="PIR" id="T50827">
    <property type="entry name" value="T50827"/>
</dbReference>
<dbReference type="RefSeq" id="NP_187703.1">
    <molecule id="O81235-1"/>
    <property type="nucleotide sequence ID" value="NM_111929.4"/>
</dbReference>
<dbReference type="PDB" id="4C7U">
    <property type="method" value="X-ray"/>
    <property type="resolution" value="1.95 A"/>
    <property type="chains" value="A/B/C/D/E/F/G/H=30-231"/>
</dbReference>
<dbReference type="PDBsum" id="4C7U"/>
<dbReference type="SMR" id="O81235"/>
<dbReference type="BioGRID" id="5597">
    <property type="interactions" value="14"/>
</dbReference>
<dbReference type="FunCoup" id="O81235">
    <property type="interactions" value="2588"/>
</dbReference>
<dbReference type="STRING" id="3702.O81235"/>
<dbReference type="iPTMnet" id="O81235"/>
<dbReference type="PaxDb" id="3702-AT3G10920.1"/>
<dbReference type="ProteomicsDB" id="232665">
    <molecule id="O81235-1"/>
</dbReference>
<dbReference type="EnsemblPlants" id="AT3G10920.1">
    <molecule id="O81235-1"/>
    <property type="protein sequence ID" value="AT3G10920.1"/>
    <property type="gene ID" value="AT3G10920"/>
</dbReference>
<dbReference type="GeneID" id="820263"/>
<dbReference type="Gramene" id="AT3G10920.1">
    <molecule id="O81235-1"/>
    <property type="protein sequence ID" value="AT3G10920.1"/>
    <property type="gene ID" value="AT3G10920"/>
</dbReference>
<dbReference type="KEGG" id="ath:AT3G10920"/>
<dbReference type="Araport" id="AT3G10920"/>
<dbReference type="TAIR" id="AT3G10920">
    <property type="gene designation" value="MSD1"/>
</dbReference>
<dbReference type="eggNOG" id="KOG0876">
    <property type="taxonomic scope" value="Eukaryota"/>
</dbReference>
<dbReference type="InParanoid" id="O81235"/>
<dbReference type="OMA" id="GSYEGWK"/>
<dbReference type="PhylomeDB" id="O81235"/>
<dbReference type="CD-CODE" id="4299E36E">
    <property type="entry name" value="Nucleolus"/>
</dbReference>
<dbReference type="EvolutionaryTrace" id="O81235"/>
<dbReference type="PRO" id="PR:O81235"/>
<dbReference type="Proteomes" id="UP000006548">
    <property type="component" value="Chromosome 3"/>
</dbReference>
<dbReference type="ExpressionAtlas" id="O81235">
    <property type="expression patterns" value="baseline and differential"/>
</dbReference>
<dbReference type="GO" id="GO:0005829">
    <property type="term" value="C:cytosol"/>
    <property type="evidence" value="ECO:0007005"/>
    <property type="project" value="TAIR"/>
</dbReference>
<dbReference type="GO" id="GO:0005759">
    <property type="term" value="C:mitochondrial matrix"/>
    <property type="evidence" value="ECO:0007669"/>
    <property type="project" value="UniProtKB-SubCell"/>
</dbReference>
<dbReference type="GO" id="GO:0005739">
    <property type="term" value="C:mitochondrion"/>
    <property type="evidence" value="ECO:0000314"/>
    <property type="project" value="TAIR"/>
</dbReference>
<dbReference type="GO" id="GO:0005507">
    <property type="term" value="F:copper ion binding"/>
    <property type="evidence" value="ECO:0007005"/>
    <property type="project" value="TAIR"/>
</dbReference>
<dbReference type="GO" id="GO:0046872">
    <property type="term" value="F:metal ion binding"/>
    <property type="evidence" value="ECO:0000314"/>
    <property type="project" value="TAIR"/>
</dbReference>
<dbReference type="GO" id="GO:0004784">
    <property type="term" value="F:superoxide dismutase activity"/>
    <property type="evidence" value="ECO:0007669"/>
    <property type="project" value="UniProtKB-EC"/>
</dbReference>
<dbReference type="GO" id="GO:0009793">
    <property type="term" value="P:embryo development ending in seed dormancy"/>
    <property type="evidence" value="ECO:0000315"/>
    <property type="project" value="TAIR"/>
</dbReference>
<dbReference type="GO" id="GO:0010043">
    <property type="term" value="P:response to zinc ion"/>
    <property type="evidence" value="ECO:0000270"/>
    <property type="project" value="TAIR"/>
</dbReference>
<dbReference type="FunFam" id="1.10.287.990:FF:000001">
    <property type="entry name" value="Superoxide dismutase"/>
    <property type="match status" value="1"/>
</dbReference>
<dbReference type="FunFam" id="3.55.40.20:FF:000002">
    <property type="entry name" value="Superoxide dismutase"/>
    <property type="match status" value="1"/>
</dbReference>
<dbReference type="Gene3D" id="1.10.287.990">
    <property type="entry name" value="Fe,Mn superoxide dismutase (SOD) domain"/>
    <property type="match status" value="1"/>
</dbReference>
<dbReference type="Gene3D" id="3.55.40.20">
    <property type="entry name" value="Iron/manganese superoxide dismutase, C-terminal domain"/>
    <property type="match status" value="1"/>
</dbReference>
<dbReference type="InterPro" id="IPR050265">
    <property type="entry name" value="Fe/Mn_Superoxide_Dismutase"/>
</dbReference>
<dbReference type="InterPro" id="IPR001189">
    <property type="entry name" value="Mn/Fe_SOD"/>
</dbReference>
<dbReference type="InterPro" id="IPR019833">
    <property type="entry name" value="Mn/Fe_SOD_BS"/>
</dbReference>
<dbReference type="InterPro" id="IPR019832">
    <property type="entry name" value="Mn/Fe_SOD_C"/>
</dbReference>
<dbReference type="InterPro" id="IPR019831">
    <property type="entry name" value="Mn/Fe_SOD_N"/>
</dbReference>
<dbReference type="InterPro" id="IPR036324">
    <property type="entry name" value="Mn/Fe_SOD_N_sf"/>
</dbReference>
<dbReference type="InterPro" id="IPR036314">
    <property type="entry name" value="SOD_C_sf"/>
</dbReference>
<dbReference type="PANTHER" id="PTHR11404">
    <property type="entry name" value="SUPEROXIDE DISMUTASE 2"/>
    <property type="match status" value="1"/>
</dbReference>
<dbReference type="PANTHER" id="PTHR11404:SF6">
    <property type="entry name" value="SUPEROXIDE DISMUTASE [MN], MITOCHONDRIAL"/>
    <property type="match status" value="1"/>
</dbReference>
<dbReference type="Pfam" id="PF02777">
    <property type="entry name" value="Sod_Fe_C"/>
    <property type="match status" value="1"/>
</dbReference>
<dbReference type="Pfam" id="PF00081">
    <property type="entry name" value="Sod_Fe_N"/>
    <property type="match status" value="1"/>
</dbReference>
<dbReference type="PIRSF" id="PIRSF000349">
    <property type="entry name" value="SODismutase"/>
    <property type="match status" value="1"/>
</dbReference>
<dbReference type="PRINTS" id="PR01703">
    <property type="entry name" value="MNSODISMTASE"/>
</dbReference>
<dbReference type="SUPFAM" id="SSF54719">
    <property type="entry name" value="Fe,Mn superoxide dismutase (SOD), C-terminal domain"/>
    <property type="match status" value="1"/>
</dbReference>
<dbReference type="SUPFAM" id="SSF46609">
    <property type="entry name" value="Fe,Mn superoxide dismutase (SOD), N-terminal domain"/>
    <property type="match status" value="1"/>
</dbReference>
<dbReference type="PROSITE" id="PS00088">
    <property type="entry name" value="SOD_MN"/>
    <property type="match status" value="1"/>
</dbReference>
<evidence type="ECO:0000250" key="1"/>
<evidence type="ECO:0000269" key="2">
    <source>
    </source>
</evidence>
<evidence type="ECO:0000269" key="3">
    <source>
    </source>
</evidence>
<evidence type="ECO:0000269" key="4">
    <source>
    </source>
</evidence>
<evidence type="ECO:0000305" key="5"/>
<evidence type="ECO:0007744" key="6">
    <source>
    </source>
</evidence>
<evidence type="ECO:0007829" key="7">
    <source>
        <dbReference type="PDB" id="4C7U"/>
    </source>
</evidence>
<gene>
    <name type="primary">MSD1</name>
    <name type="synonym">MEE3</name>
    <name type="synonym">SODA</name>
    <name type="ordered locus">At3g10920</name>
    <name type="ORF">F9F8.26</name>
</gene>
<sequence length="231" mass="25444">MAIRCVASRKTLAGLKETSSRLLRIRGIQTFTLPDLPYDYGALEPAISGEIMQIHHQKHHQAYVTNYNNALEQLDQAVNKGDASTVVKLQSAIKFNGGGHVNHSIFWKNLAPSSEGGGEPPKGSLGSAIDAHFGSLEGLVKKMSAEGAAVQGSGWVWLGLDKELKKLVVDTTANQDPLVTKGGSLVPLVGIDVWEHAYYLQYKNVRPEYLKNVWKVINWKYASEVYEKENN</sequence>
<accession>O81235</accession>
<accession>Q8LEP0</accession>
<accession>Q9SRK3</accession>
<comment type="function">
    <text>Destroys superoxide anion radicals which are normally produced within the cells and which are toxic to biological systems.</text>
</comment>
<comment type="catalytic activity">
    <reaction>
        <text>2 superoxide + 2 H(+) = H2O2 + O2</text>
        <dbReference type="Rhea" id="RHEA:20696"/>
        <dbReference type="ChEBI" id="CHEBI:15378"/>
        <dbReference type="ChEBI" id="CHEBI:15379"/>
        <dbReference type="ChEBI" id="CHEBI:16240"/>
        <dbReference type="ChEBI" id="CHEBI:18421"/>
        <dbReference type="EC" id="1.15.1.1"/>
    </reaction>
</comment>
<comment type="cofactor">
    <cofactor evidence="1">
        <name>Mn(2+)</name>
        <dbReference type="ChEBI" id="CHEBI:29035"/>
    </cofactor>
    <text evidence="1">Binds 1 Mn(2+) ion per subunit.</text>
</comment>
<comment type="activity regulation">
    <text evidence="3">Activated by MTM1.</text>
</comment>
<comment type="subunit">
    <text evidence="1">Homotetramer.</text>
</comment>
<comment type="subcellular location">
    <subcellularLocation>
        <location evidence="2">Mitochondrion matrix</location>
    </subcellularLocation>
</comment>
<comment type="alternative products">
    <event type="alternative splicing"/>
    <isoform>
        <id>O81235-1</id>
        <name>1</name>
        <sequence type="displayed"/>
    </isoform>
    <text>A number of isoforms are produced. According to EST sequences.</text>
</comment>
<comment type="induction">
    <text evidence="4">Induced by salt stress.</text>
</comment>
<comment type="similarity">
    <text evidence="5">Belongs to the iron/manganese superoxide dismutase family.</text>
</comment>
<reference key="1">
    <citation type="journal article" date="1998" name="Plant Physiol.">
        <title>Superoxide dismutase in Arabidopsis: an eclectic enzyme family with disparate regulation and protein localization.</title>
        <authorList>
            <person name="Kliebenstein D.J."/>
            <person name="Monde R.A."/>
            <person name="Last R.L."/>
        </authorList>
    </citation>
    <scope>NUCLEOTIDE SEQUENCE [MRNA]</scope>
    <scope>GENE FAMILY</scope>
    <source>
        <strain>cv. Columbia</strain>
    </source>
</reference>
<reference key="2">
    <citation type="journal article" date="2000" name="Nature">
        <title>Sequence and analysis of chromosome 3 of the plant Arabidopsis thaliana.</title>
        <authorList>
            <person name="Salanoubat M."/>
            <person name="Lemcke K."/>
            <person name="Rieger M."/>
            <person name="Ansorge W."/>
            <person name="Unseld M."/>
            <person name="Fartmann B."/>
            <person name="Valle G."/>
            <person name="Bloecker H."/>
            <person name="Perez-Alonso M."/>
            <person name="Obermaier B."/>
            <person name="Delseny M."/>
            <person name="Boutry M."/>
            <person name="Grivell L.A."/>
            <person name="Mache R."/>
            <person name="Puigdomenech P."/>
            <person name="De Simone V."/>
            <person name="Choisne N."/>
            <person name="Artiguenave F."/>
            <person name="Robert C."/>
            <person name="Brottier P."/>
            <person name="Wincker P."/>
            <person name="Cattolico L."/>
            <person name="Weissenbach J."/>
            <person name="Saurin W."/>
            <person name="Quetier F."/>
            <person name="Schaefer M."/>
            <person name="Mueller-Auer S."/>
            <person name="Gabel C."/>
            <person name="Fuchs M."/>
            <person name="Benes V."/>
            <person name="Wurmbach E."/>
            <person name="Drzonek H."/>
            <person name="Erfle H."/>
            <person name="Jordan N."/>
            <person name="Bangert S."/>
            <person name="Wiedelmann R."/>
            <person name="Kranz H."/>
            <person name="Voss H."/>
            <person name="Holland R."/>
            <person name="Brandt P."/>
            <person name="Nyakatura G."/>
            <person name="Vezzi A."/>
            <person name="D'Angelo M."/>
            <person name="Pallavicini A."/>
            <person name="Toppo S."/>
            <person name="Simionati B."/>
            <person name="Conrad A."/>
            <person name="Hornischer K."/>
            <person name="Kauer G."/>
            <person name="Loehnert T.-H."/>
            <person name="Nordsiek G."/>
            <person name="Reichelt J."/>
            <person name="Scharfe M."/>
            <person name="Schoen O."/>
            <person name="Bargues M."/>
            <person name="Terol J."/>
            <person name="Climent J."/>
            <person name="Navarro P."/>
            <person name="Collado C."/>
            <person name="Perez-Perez A."/>
            <person name="Ottenwaelder B."/>
            <person name="Duchemin D."/>
            <person name="Cooke R."/>
            <person name="Laudie M."/>
            <person name="Berger-Llauro C."/>
            <person name="Purnelle B."/>
            <person name="Masuy D."/>
            <person name="de Haan M."/>
            <person name="Maarse A.C."/>
            <person name="Alcaraz J.-P."/>
            <person name="Cottet A."/>
            <person name="Casacuberta E."/>
            <person name="Monfort A."/>
            <person name="Argiriou A."/>
            <person name="Flores M."/>
            <person name="Liguori R."/>
            <person name="Vitale D."/>
            <person name="Mannhaupt G."/>
            <person name="Haase D."/>
            <person name="Schoof H."/>
            <person name="Rudd S."/>
            <person name="Zaccaria P."/>
            <person name="Mewes H.-W."/>
            <person name="Mayer K.F.X."/>
            <person name="Kaul S."/>
            <person name="Town C.D."/>
            <person name="Koo H.L."/>
            <person name="Tallon L.J."/>
            <person name="Jenkins J."/>
            <person name="Rooney T."/>
            <person name="Rizzo M."/>
            <person name="Walts A."/>
            <person name="Utterback T."/>
            <person name="Fujii C.Y."/>
            <person name="Shea T.P."/>
            <person name="Creasy T.H."/>
            <person name="Haas B."/>
            <person name="Maiti R."/>
            <person name="Wu D."/>
            <person name="Peterson J."/>
            <person name="Van Aken S."/>
            <person name="Pai G."/>
            <person name="Militscher J."/>
            <person name="Sellers P."/>
            <person name="Gill J.E."/>
            <person name="Feldblyum T.V."/>
            <person name="Preuss D."/>
            <person name="Lin X."/>
            <person name="Nierman W.C."/>
            <person name="Salzberg S.L."/>
            <person name="White O."/>
            <person name="Venter J.C."/>
            <person name="Fraser C.M."/>
            <person name="Kaneko T."/>
            <person name="Nakamura Y."/>
            <person name="Sato S."/>
            <person name="Kato T."/>
            <person name="Asamizu E."/>
            <person name="Sasamoto S."/>
            <person name="Kimura T."/>
            <person name="Idesawa K."/>
            <person name="Kawashima K."/>
            <person name="Kishida Y."/>
            <person name="Kiyokawa C."/>
            <person name="Kohara M."/>
            <person name="Matsumoto M."/>
            <person name="Matsuno A."/>
            <person name="Muraki A."/>
            <person name="Nakayama S."/>
            <person name="Nakazaki N."/>
            <person name="Shinpo S."/>
            <person name="Takeuchi C."/>
            <person name="Wada T."/>
            <person name="Watanabe A."/>
            <person name="Yamada M."/>
            <person name="Yasuda M."/>
            <person name="Tabata S."/>
        </authorList>
    </citation>
    <scope>NUCLEOTIDE SEQUENCE [LARGE SCALE GENOMIC DNA]</scope>
    <source>
        <strain>cv. Columbia</strain>
    </source>
</reference>
<reference key="3">
    <citation type="journal article" date="2017" name="Plant J.">
        <title>Araport11: a complete reannotation of the Arabidopsis thaliana reference genome.</title>
        <authorList>
            <person name="Cheng C.Y."/>
            <person name="Krishnakumar V."/>
            <person name="Chan A.P."/>
            <person name="Thibaud-Nissen F."/>
            <person name="Schobel S."/>
            <person name="Town C.D."/>
        </authorList>
    </citation>
    <scope>GENOME REANNOTATION</scope>
    <source>
        <strain>cv. Columbia</strain>
    </source>
</reference>
<reference key="4">
    <citation type="journal article" date="2003" name="Science">
        <title>Empirical analysis of transcriptional activity in the Arabidopsis genome.</title>
        <authorList>
            <person name="Yamada K."/>
            <person name="Lim J."/>
            <person name="Dale J.M."/>
            <person name="Chen H."/>
            <person name="Shinn P."/>
            <person name="Palm C.J."/>
            <person name="Southwick A.M."/>
            <person name="Wu H.C."/>
            <person name="Kim C.J."/>
            <person name="Nguyen M."/>
            <person name="Pham P.K."/>
            <person name="Cheuk R.F."/>
            <person name="Karlin-Newmann G."/>
            <person name="Liu S.X."/>
            <person name="Lam B."/>
            <person name="Sakano H."/>
            <person name="Wu T."/>
            <person name="Yu G."/>
            <person name="Miranda M."/>
            <person name="Quach H.L."/>
            <person name="Tripp M."/>
            <person name="Chang C.H."/>
            <person name="Lee J.M."/>
            <person name="Toriumi M.J."/>
            <person name="Chan M.M."/>
            <person name="Tang C.C."/>
            <person name="Onodera C.S."/>
            <person name="Deng J.M."/>
            <person name="Akiyama K."/>
            <person name="Ansari Y."/>
            <person name="Arakawa T."/>
            <person name="Banh J."/>
            <person name="Banno F."/>
            <person name="Bowser L."/>
            <person name="Brooks S.Y."/>
            <person name="Carninci P."/>
            <person name="Chao Q."/>
            <person name="Choy N."/>
            <person name="Enju A."/>
            <person name="Goldsmith A.D."/>
            <person name="Gurjal M."/>
            <person name="Hansen N.F."/>
            <person name="Hayashizaki Y."/>
            <person name="Johnson-Hopson C."/>
            <person name="Hsuan V.W."/>
            <person name="Iida K."/>
            <person name="Karnes M."/>
            <person name="Khan S."/>
            <person name="Koesema E."/>
            <person name="Ishida J."/>
            <person name="Jiang P.X."/>
            <person name="Jones T."/>
            <person name="Kawai J."/>
            <person name="Kamiya A."/>
            <person name="Meyers C."/>
            <person name="Nakajima M."/>
            <person name="Narusaka M."/>
            <person name="Seki M."/>
            <person name="Sakurai T."/>
            <person name="Satou M."/>
            <person name="Tamse R."/>
            <person name="Vaysberg M."/>
            <person name="Wallender E.K."/>
            <person name="Wong C."/>
            <person name="Yamamura Y."/>
            <person name="Yuan S."/>
            <person name="Shinozaki K."/>
            <person name="Davis R.W."/>
            <person name="Theologis A."/>
            <person name="Ecker J.R."/>
        </authorList>
    </citation>
    <scope>NUCLEOTIDE SEQUENCE [LARGE SCALE MRNA]</scope>
    <source>
        <strain>cv. Columbia</strain>
    </source>
</reference>
<reference key="5">
    <citation type="submission" date="2002-03" db="EMBL/GenBank/DDBJ databases">
        <title>Full-length cDNA from Arabidopsis thaliana.</title>
        <authorList>
            <person name="Brover V.V."/>
            <person name="Troukhan M.E."/>
            <person name="Alexandrov N.A."/>
            <person name="Lu Y.-P."/>
            <person name="Flavell R.B."/>
            <person name="Feldmann K.A."/>
        </authorList>
    </citation>
    <scope>NUCLEOTIDE SEQUENCE [LARGE SCALE MRNA]</scope>
</reference>
<reference key="6">
    <citation type="journal article" date="2004" name="Plant Cell">
        <title>Experimental analysis of the Arabidopsis mitochondrial proteome highlights signaling and regulatory components, provides assessment of targeting prediction programs, and indicates plant-specific mitochondrial proteins.</title>
        <authorList>
            <person name="Heazlewood J.L."/>
            <person name="Tonti-Filippini J.S."/>
            <person name="Gout A.M."/>
            <person name="Day D.A."/>
            <person name="Whelan J."/>
            <person name="Millar A.H."/>
        </authorList>
    </citation>
    <scope>IDENTIFICATION BY MASS SPECTROMETRY</scope>
    <scope>SUBCELLULAR LOCATION [LARGE SCALE ANALYSIS]</scope>
    <source>
        <strain>cv. Landsberg erecta</strain>
    </source>
</reference>
<reference key="7">
    <citation type="journal article" date="2007" name="Planta">
        <title>AtMTM1, a novel mitochondrial protein, may be involved in activation of the manganese-containing superoxide dismutase in Arabidopsis.</title>
        <authorList>
            <person name="Su Z."/>
            <person name="Chai M.F."/>
            <person name="Lu P.L."/>
            <person name="An R."/>
            <person name="Chen J."/>
            <person name="Wang X.C."/>
        </authorList>
    </citation>
    <scope>ACTIVITY REGULATION</scope>
</reference>
<reference key="8">
    <citation type="journal article" date="2008" name="Physiol. Plantarum">
        <title>Long-term effects of mild salt stress on growth, ion accumulation and superoxide dismutase expression of Arabidopsis rosette leaves.</title>
        <authorList>
            <person name="Attia H."/>
            <person name="Arnaud N."/>
            <person name="Karray N."/>
            <person name="Lachaal M."/>
        </authorList>
    </citation>
    <scope>INDUCTION BY SALT</scope>
</reference>
<reference key="9">
    <citation type="journal article" date="2012" name="J. Proteome Res.">
        <title>Identification of phosphoproteins in Arabidopsis thaliana leaves using polyethylene glycol fractionation, immobilized metal-ion affinity chromatography, two-dimensional gel electrophoresis and mass spectrometry.</title>
        <authorList>
            <person name="Aryal U.K."/>
            <person name="Krochko J.E."/>
            <person name="Ross A.R."/>
        </authorList>
    </citation>
    <scope>PHOSPHORYLATION [LARGE SCALE ANALYSIS] AT SER-124</scope>
    <scope>IDENTIFICATION BY MASS SPECTROMETRY [LARGE SCALE ANALYSIS]</scope>
</reference>
<name>SODM1_ARATH</name>
<keyword id="KW-0002">3D-structure</keyword>
<keyword id="KW-0025">Alternative splicing</keyword>
<keyword id="KW-0464">Manganese</keyword>
<keyword id="KW-0479">Metal-binding</keyword>
<keyword id="KW-0496">Mitochondrion</keyword>
<keyword id="KW-0560">Oxidoreductase</keyword>
<keyword id="KW-0597">Phosphoprotein</keyword>
<keyword id="KW-1185">Reference proteome</keyword>
<keyword id="KW-0809">Transit peptide</keyword>
<proteinExistence type="evidence at protein level"/>
<protein>
    <recommendedName>
        <fullName>Superoxide dismutase [Mn] 1, mitochondrial</fullName>
        <ecNumber>1.15.1.1</ecNumber>
    </recommendedName>
    <alternativeName>
        <fullName>Protein MANGANESE SUPEROXIDE DISMUTASE 1</fullName>
        <shortName>AtMSD1</shortName>
    </alternativeName>
    <alternativeName>
        <fullName>Protein MATERNAL EFFECT EMBRYO ARREST 33</fullName>
    </alternativeName>
</protein>
<feature type="transit peptide" description="Mitochondrion" evidence="1">
    <location>
        <begin position="1"/>
        <end position="29"/>
    </location>
</feature>
<feature type="chain" id="PRO_0000032891" description="Superoxide dismutase [Mn] 1, mitochondrial">
    <location>
        <begin position="30"/>
        <end position="231"/>
    </location>
</feature>
<feature type="binding site" evidence="1">
    <location>
        <position position="55"/>
    </location>
    <ligand>
        <name>Mn(2+)</name>
        <dbReference type="ChEBI" id="CHEBI:29035"/>
    </ligand>
</feature>
<feature type="binding site" evidence="1">
    <location>
        <position position="103"/>
    </location>
    <ligand>
        <name>Mn(2+)</name>
        <dbReference type="ChEBI" id="CHEBI:29035"/>
    </ligand>
</feature>
<feature type="binding site" evidence="1">
    <location>
        <position position="192"/>
    </location>
    <ligand>
        <name>Mn(2+)</name>
        <dbReference type="ChEBI" id="CHEBI:29035"/>
    </ligand>
</feature>
<feature type="binding site" evidence="1">
    <location>
        <position position="196"/>
    </location>
    <ligand>
        <name>Mn(2+)</name>
        <dbReference type="ChEBI" id="CHEBI:29035"/>
    </ligand>
</feature>
<feature type="modified residue" description="Phosphoserine" evidence="6">
    <location>
        <position position="124"/>
    </location>
</feature>
<feature type="sequence conflict" description="In Ref. 1; AAC24832." evidence="5" ref="1">
    <original>V</original>
    <variation>F</variation>
    <location>
        <position position="169"/>
    </location>
</feature>
<feature type="sequence conflict" description="In Ref. 5; AAM62550." evidence="5" ref="5">
    <original>N</original>
    <variation>S</variation>
    <location>
        <position position="230"/>
    </location>
</feature>
<feature type="helix" evidence="7">
    <location>
        <begin position="40"/>
        <end position="43"/>
    </location>
</feature>
<feature type="turn" evidence="7">
    <location>
        <begin position="44"/>
        <end position="46"/>
    </location>
</feature>
<feature type="helix" evidence="7">
    <location>
        <begin position="49"/>
        <end position="57"/>
    </location>
</feature>
<feature type="helix" evidence="7">
    <location>
        <begin position="59"/>
        <end position="80"/>
    </location>
</feature>
<feature type="helix" evidence="7">
    <location>
        <begin position="83"/>
        <end position="88"/>
    </location>
</feature>
<feature type="helix" evidence="7">
    <location>
        <begin position="90"/>
        <end position="108"/>
    </location>
</feature>
<feature type="helix" evidence="7">
    <location>
        <begin position="113"/>
        <end position="115"/>
    </location>
</feature>
<feature type="turn" evidence="7">
    <location>
        <begin position="116"/>
        <end position="118"/>
    </location>
</feature>
<feature type="helix" evidence="7">
    <location>
        <begin position="123"/>
        <end position="133"/>
    </location>
</feature>
<feature type="helix" evidence="7">
    <location>
        <begin position="136"/>
        <end position="149"/>
    </location>
</feature>
<feature type="strand" evidence="7">
    <location>
        <begin position="152"/>
        <end position="161"/>
    </location>
</feature>
<feature type="turn" evidence="7">
    <location>
        <begin position="162"/>
        <end position="165"/>
    </location>
</feature>
<feature type="strand" evidence="7">
    <location>
        <begin position="166"/>
        <end position="173"/>
    </location>
</feature>
<feature type="helix" evidence="7">
    <location>
        <begin position="178"/>
        <end position="181"/>
    </location>
</feature>
<feature type="strand" evidence="7">
    <location>
        <begin position="185"/>
        <end position="192"/>
    </location>
</feature>
<feature type="helix" evidence="7">
    <location>
        <begin position="195"/>
        <end position="197"/>
    </location>
</feature>
<feature type="helix" evidence="7">
    <location>
        <begin position="199"/>
        <end position="202"/>
    </location>
</feature>
<feature type="helix" evidence="7">
    <location>
        <begin position="206"/>
        <end position="212"/>
    </location>
</feature>
<feature type="helix" evidence="7">
    <location>
        <begin position="213"/>
        <end position="216"/>
    </location>
</feature>
<feature type="helix" evidence="7">
    <location>
        <begin position="219"/>
        <end position="228"/>
    </location>
</feature>
<organism>
    <name type="scientific">Arabidopsis thaliana</name>
    <name type="common">Mouse-ear cress</name>
    <dbReference type="NCBI Taxonomy" id="3702"/>
    <lineage>
        <taxon>Eukaryota</taxon>
        <taxon>Viridiplantae</taxon>
        <taxon>Streptophyta</taxon>
        <taxon>Embryophyta</taxon>
        <taxon>Tracheophyta</taxon>
        <taxon>Spermatophyta</taxon>
        <taxon>Magnoliopsida</taxon>
        <taxon>eudicotyledons</taxon>
        <taxon>Gunneridae</taxon>
        <taxon>Pentapetalae</taxon>
        <taxon>rosids</taxon>
        <taxon>malvids</taxon>
        <taxon>Brassicales</taxon>
        <taxon>Brassicaceae</taxon>
        <taxon>Camelineae</taxon>
        <taxon>Arabidopsis</taxon>
    </lineage>
</organism>